<protein>
    <recommendedName>
        <fullName evidence="6">Nonribosomal peptide synthetase hasD</fullName>
        <ecNumber evidence="8">6.3.2.-</ecNumber>
    </recommendedName>
    <alternativeName>
        <fullName evidence="6">Hexadehydro-astechrome biosynthesis cluster protein D</fullName>
    </alternativeName>
</protein>
<accession>B0XWK8</accession>
<reference key="1">
    <citation type="journal article" date="2008" name="PLoS Genet.">
        <title>Genomic islands in the pathogenic filamentous fungus Aspergillus fumigatus.</title>
        <authorList>
            <person name="Fedorova N.D."/>
            <person name="Khaldi N."/>
            <person name="Joardar V.S."/>
            <person name="Maiti R."/>
            <person name="Amedeo P."/>
            <person name="Anderson M.J."/>
            <person name="Crabtree J."/>
            <person name="Silva J.C."/>
            <person name="Badger J.H."/>
            <person name="Albarraq A."/>
            <person name="Angiuoli S."/>
            <person name="Bussey H."/>
            <person name="Bowyer P."/>
            <person name="Cotty P.J."/>
            <person name="Dyer P.S."/>
            <person name="Egan A."/>
            <person name="Galens K."/>
            <person name="Fraser-Liggett C.M."/>
            <person name="Haas B.J."/>
            <person name="Inman J.M."/>
            <person name="Kent R."/>
            <person name="Lemieux S."/>
            <person name="Malavazi I."/>
            <person name="Orvis J."/>
            <person name="Roemer T."/>
            <person name="Ronning C.M."/>
            <person name="Sundaram J.P."/>
            <person name="Sutton G."/>
            <person name="Turner G."/>
            <person name="Venter J.C."/>
            <person name="White O.R."/>
            <person name="Whitty B.R."/>
            <person name="Youngman P."/>
            <person name="Wolfe K.H."/>
            <person name="Goldman G.H."/>
            <person name="Wortman J.R."/>
            <person name="Jiang B."/>
            <person name="Denning D.W."/>
            <person name="Nierman W.C."/>
        </authorList>
    </citation>
    <scope>NUCLEOTIDE SEQUENCE [LARGE SCALE GENOMIC DNA]</scope>
    <source>
        <strain>CBS 144.89 / FGSC A1163 / CEA10</strain>
    </source>
</reference>
<reference key="2">
    <citation type="journal article" date="2013" name="J. Am. Chem. Soc.">
        <title>A nonribosomal peptide synthetase-derived iron(III) complex from the pathogenic fungus Aspergillus fumigatus.</title>
        <authorList>
            <person name="Yin W.B."/>
            <person name="Baccile J.A."/>
            <person name="Bok J.W."/>
            <person name="Chen Y."/>
            <person name="Keller N.P."/>
            <person name="Schroeder F.C."/>
        </authorList>
    </citation>
    <scope>FUNCTION</scope>
    <scope>DISRUPTION PHENOTYPE</scope>
    <scope>PATHWAY</scope>
</reference>
<reference key="3">
    <citation type="journal article" date="2022" name="J. Fungi">
        <title>Stress responses elicited by glucose withdrawal in Aspergillus fumigatus.</title>
        <authorList>
            <person name="Emri T."/>
            <person name="Antal K."/>
            <person name="Gila B."/>
            <person name="Jonas A.P."/>
            <person name="Pocsi I."/>
        </authorList>
    </citation>
    <scope>INDUCTION</scope>
</reference>
<comment type="function">
    <text evidence="4">Nonribosomal peptide synthetase; part of the gene cluster that mediates the biosynthesis of hexadehydro-astechrome (HAS), a tryptophan-derived iron(III)-complex that acts as a virulence factor in infected mice (PubMed:23360537). Within the pathway, the NRPS condenses tryptophan and alanine to produce the Trp-Ala dipeptide (PubMed:23360537). The 7-dimethylallyltryptophan synthase hasE then catalyzes the prenylation of the hasD-tethered tryptophan or the resulting tethered Trp-Ala dipeptide at the C-7 position of the indole moiety. HAS biosynthesis continues via tethered intermediates with the succesive actions of the cytochrome P450 monooxygenase hasH, the O-methyltransferase hasC, and the FAD-linked oxidoreductase hasG. The resulting O-methylated diketopiperazine is then released from hasD. Finally, three O-methylated diketopiperazine molecules assemble in a trimeric complex with Fe(III) to produce hexadehydro-astechrome (PubMed:23360537).</text>
</comment>
<comment type="cofactor">
    <cofactor evidence="2">
        <name>pantetheine 4'-phosphate</name>
        <dbReference type="ChEBI" id="CHEBI:47942"/>
    </cofactor>
</comment>
<comment type="pathway">
    <text evidence="4">Secondary metabolite biosynthesis.</text>
</comment>
<comment type="induction">
    <text evidence="5">The expression of the hexadehydro-astechrome cluster is induced by glucose.</text>
</comment>
<comment type="domain">
    <text evidence="8">NRP synthetases are composed of discrete domains (adenylation (A), thiolation (T) or peptidyl carrier protein (PCP) and condensation (C) domains) which when grouped together are referred to as a single module. Each module is responsible for the recognition (via the A domain) and incorporation of a single amino acid into the growing peptide product. Thus, an NRP synthetase is generally composed of one or more modules and can terminate in a thioesterase domain (TE) that releases the newly synthesized peptide from the enzyme. HasD has the following architecture: A-T-C-A-T-C-T.</text>
</comment>
<comment type="disruption phenotype">
    <text evidence="4">Does not accumulate prenylated tryptophan derivatives.</text>
</comment>
<comment type="similarity">
    <text evidence="7">Belongs to the NRP synthetase family.</text>
</comment>
<name>HASD_ASPFC</name>
<sequence>MIKSAYAWQCSVDIPYEPTYYPPGPRGRPGAASGTISLSLKAPALSGVRLHPRNGFFEVVRLEHTCWKAAPMNLTLTTTSITIQPSATMANRAPTLLDHFHDQLQKHSSSVAIEDGTQSADQGAWERVTYAQLDALSDSWSKRLRQAGVGAGCIVPLLSKRSVAMVAATLAILKLRAAYVPIDIDSWGKDRIDTVLKTVNPQIIVSTSPCPKDHYPYPVVALERNDFDETVTSNGTQWTRNDEDSIDRGNDLAYIIFTSGTTGIPKGVKIGQRSISRYVKEGGDLPFNFNTTHGTRVLLICSIAFDVCAGVMFNTLCNGGTLVLADPSTFETAAKTCHVLPLTPSILVTLDPKAGFDTVEKIFLGGESPSPSLIEAWSSPRRRLYNAYGPTETTCTAFMGELLPGSPITIGYPISYSTVTLLDEDGMESVEGEICIAGLGLALGYFHDPERTNSAFVEWNGVRIYKTGDYGRRTKHGLQFCGRRDSVVKNRGFLINLEADVEPALLSYDKVDSASAFMSQGQLIAFVTPTSAKEGLREYLANTVSSFLVPDTIYSLDEFPRTSNGKVDRRSLMRMHELEQGSDTASLERGLGAVESVRRGLSHVLRLPESQILPASSFRHLGGHSLAAVMLVSVLRRMGFGISVAEVLLLDTVENIAAAVVELSDIPHALSAQEDLIERLRHDISTTRPLDEGVTIAPMTDMQTRLLGASVATPGLSFIKTSFTLDHPEKEDLTSTLRAAWVRLHQTHEILRTAFVLTASNGAQIISQEPDFSWKEKFVTESEWESVCRREEHLDVADFPDFDAENRASLSRVVLIIAPRRRTRFVWTVHHSLIDGWSMATLMRDFASCLDGKPIPAPPQFAQVAQAIGQLKAESSDRAVSFWKEYLDGYTPAQRLRVSPPSDVSDYTQAALSRKLTVSVSALEDAARDRFAVTPATLLYAAWGLLLSRYSGTDRAALGAVLSGRSLPIPGVENIIGPLINTLPLAINTQEAQSTYSFVQSVFRRLCDILEFQWSPVALIQEGCGCNPSELFETLFALQYDFPQTPWKSSEVPEPRDIRYEEATQVPLTVLLDNANGQFEVRFIYRRSHFGDATVQRMIGQFGNLLENLIAAQPDTDLSNVTGQMFNNRVYEMSIAKPGQPVSACKVPESLTEAIENSIQAHPDIYAVEGLTGRLTYREFGRMTEHISQRLLQHIQPGSVACMISDGSLLWLLAMVAIIRAGAIYCPVDEKLPRDRKDYMVRNSRAALILYANSSQEPLCNGVPSLNMESIMQEISSSSGSPIATSRNRPSGDTVACLVYTSGSTGLPKAVQLQHKGILNVISQPEGRLYSRPGQRNAQMLSLGFDCCIKEVFSTICFGATLVLKDPENPISHLARVDATMATPSLLATLEPTDYPNLKVITVAGEAVSQVLNDKWAAGRTLINGYGPAECTLISTTAILHPGNRVSIGKPLPGLSCYLLDSNKRPVPMGVSGEIYISGVQVTPGYLHNEQETSKRFLSDSFNPGQVMYRTGDIGRMLEDGNIEYIGREDNQIKLRGFRIDLGEVQSTISKLASTASNVALIVSNGNLVAFMTPETIDVRSLAKSLETQLPQYAVPNRIIALATLPTSANNKVDSSALQRYLRDHGKDGAVVEDLETDTQRVLAVIWADMLGRDLNQTPISPSDRFFELGGHSLLQIKVAQAISKRWNIRPLPLKQVIRHHSLQDLSLAIDELVSDPRTVSTMPFLEMTPVARNGQLPLSYLEKEMLLNHLISGGSPAGNMNFVCKIRGDINAETLADAFQRVTADVEVFRTRYSVIEGTLFRQQAPGSVKVPRVVQTGNLSSFVHGRITKSFDLSTEPPVDVSIIIGTPMQAMLVVVMSHVVGDAATMATYLNRVSRTYDLLRSNSQTTNTSTVPDNLTYIDWAHWASTLQPNPRALTFWSSYLSNPPSPLTFGNPSPAPATYIGLTRSWTLPPSMYRKLSDLAAKASVTMHQLILAAVFFSLQCVDRRDDILVAAPFTHRTEPGTESLPGLFLDRLLLRIQRSPHQSSIFDFLSSVRETSQQALAHVIPFHTLRHSLAHKPSLIDPLFKVMVTYHTAADQRPLLDLSGAEVQPIPWRHTGGSKFPLKFEFTEMATQDLEVDMEYDLGCIREDIALRLEFALSFALQLMVLERETDDIIQLVQMSFCPGEGSPVGLTPSHEGSAELTNGTNKTDSTTGQQELENNLTDVVCECLGLEIQDVDADKSFWDLGAQSMDALKLQHLCEKRGVRVRLRDIFVSRSLLELATCAVII</sequence>
<keyword id="KW-0436">Ligase</keyword>
<keyword id="KW-0596">Phosphopantetheine</keyword>
<keyword id="KW-0597">Phosphoprotein</keyword>
<keyword id="KW-0677">Repeat</keyword>
<keyword id="KW-0843">Virulence</keyword>
<proteinExistence type="evidence at transcript level"/>
<organism>
    <name type="scientific">Aspergillus fumigatus (strain CBS 144.89 / FGSC A1163 / CEA10)</name>
    <name type="common">Neosartorya fumigata</name>
    <dbReference type="NCBI Taxonomy" id="451804"/>
    <lineage>
        <taxon>Eukaryota</taxon>
        <taxon>Fungi</taxon>
        <taxon>Dikarya</taxon>
        <taxon>Ascomycota</taxon>
        <taxon>Pezizomycotina</taxon>
        <taxon>Eurotiomycetes</taxon>
        <taxon>Eurotiomycetidae</taxon>
        <taxon>Eurotiales</taxon>
        <taxon>Aspergillaceae</taxon>
        <taxon>Aspergillus</taxon>
        <taxon>Aspergillus subgen. Fumigati</taxon>
    </lineage>
</organism>
<feature type="chain" id="PRO_0000461228" description="Nonribosomal peptide synthetase hasD">
    <location>
        <begin position="1"/>
        <end position="2273"/>
    </location>
</feature>
<feature type="domain" description="Carrier 1" evidence="2">
    <location>
        <begin position="588"/>
        <end position="664"/>
    </location>
</feature>
<feature type="domain" description="Carrier 2" evidence="2">
    <location>
        <begin position="1634"/>
        <end position="1714"/>
    </location>
</feature>
<feature type="domain" description="Carrier 3" evidence="2">
    <location>
        <begin position="2201"/>
        <end position="2273"/>
    </location>
</feature>
<feature type="region of interest" description="Adenylation 1" evidence="1">
    <location>
        <begin position="100"/>
        <end position="446"/>
    </location>
</feature>
<feature type="region of interest" description="Condensation 1" evidence="1">
    <location>
        <begin position="696"/>
        <end position="1120"/>
    </location>
</feature>
<feature type="region of interest" description="Adenylation 2" evidence="1">
    <location>
        <begin position="1156"/>
        <end position="1487"/>
    </location>
</feature>
<feature type="region of interest" description="Condensation 2" evidence="1">
    <location>
        <begin position="1735"/>
        <end position="2127"/>
    </location>
</feature>
<feature type="region of interest" description="Disordered" evidence="3">
    <location>
        <begin position="2174"/>
        <end position="2200"/>
    </location>
</feature>
<feature type="compositionally biased region" description="Polar residues" evidence="3">
    <location>
        <begin position="2186"/>
        <end position="2200"/>
    </location>
</feature>
<feature type="modified residue" description="O-(pantetheine 4'-phosphoryl)serine" evidence="2">
    <location>
        <position position="625"/>
    </location>
</feature>
<feature type="modified residue" description="O-(pantetheine 4'-phosphoryl)serine" evidence="2">
    <location>
        <position position="1673"/>
    </location>
</feature>
<feature type="modified residue" description="O-(pantetheine 4'-phosphoryl)serine" evidence="2">
    <location>
        <position position="2235"/>
    </location>
</feature>
<gene>
    <name evidence="6" type="primary">hasD</name>
    <name type="ORF">AFUB_036270</name>
</gene>
<evidence type="ECO:0000250" key="1">
    <source>
        <dbReference type="UniProtKB" id="Q4WYG2"/>
    </source>
</evidence>
<evidence type="ECO:0000255" key="2">
    <source>
        <dbReference type="PROSITE-ProRule" id="PRU00258"/>
    </source>
</evidence>
<evidence type="ECO:0000256" key="3">
    <source>
        <dbReference type="SAM" id="MobiDB-lite"/>
    </source>
</evidence>
<evidence type="ECO:0000269" key="4">
    <source>
    </source>
</evidence>
<evidence type="ECO:0000269" key="5">
    <source>
    </source>
</evidence>
<evidence type="ECO:0000303" key="6">
    <source>
    </source>
</evidence>
<evidence type="ECO:0000305" key="7"/>
<evidence type="ECO:0000305" key="8">
    <source>
    </source>
</evidence>
<dbReference type="EC" id="6.3.2.-" evidence="8"/>
<dbReference type="EMBL" id="DS499596">
    <property type="protein sequence ID" value="EDP52461.1"/>
    <property type="molecule type" value="Genomic_DNA"/>
</dbReference>
<dbReference type="SMR" id="B0XWK8"/>
<dbReference type="EnsemblFungi" id="EDP52461">
    <property type="protein sequence ID" value="EDP52461"/>
    <property type="gene ID" value="AFUB_036270"/>
</dbReference>
<dbReference type="VEuPathDB" id="FungiDB:AFUB_036270"/>
<dbReference type="HOGENOM" id="CLU_000022_0_5_1"/>
<dbReference type="OrthoDB" id="35292at5052"/>
<dbReference type="PhylomeDB" id="B0XWK8"/>
<dbReference type="Proteomes" id="UP000001699">
    <property type="component" value="Unassembled WGS sequence"/>
</dbReference>
<dbReference type="GO" id="GO:0005737">
    <property type="term" value="C:cytoplasm"/>
    <property type="evidence" value="ECO:0007669"/>
    <property type="project" value="TreeGrafter"/>
</dbReference>
<dbReference type="GO" id="GO:0016874">
    <property type="term" value="F:ligase activity"/>
    <property type="evidence" value="ECO:0007669"/>
    <property type="project" value="UniProtKB-KW"/>
</dbReference>
<dbReference type="GO" id="GO:0031177">
    <property type="term" value="F:phosphopantetheine binding"/>
    <property type="evidence" value="ECO:0007669"/>
    <property type="project" value="TreeGrafter"/>
</dbReference>
<dbReference type="GO" id="GO:0043041">
    <property type="term" value="P:amino acid activation for nonribosomal peptide biosynthetic process"/>
    <property type="evidence" value="ECO:0007669"/>
    <property type="project" value="TreeGrafter"/>
</dbReference>
<dbReference type="GO" id="GO:0044550">
    <property type="term" value="P:secondary metabolite biosynthetic process"/>
    <property type="evidence" value="ECO:0007669"/>
    <property type="project" value="TreeGrafter"/>
</dbReference>
<dbReference type="CDD" id="cd17653">
    <property type="entry name" value="A_NRPS_GliP_like"/>
    <property type="match status" value="2"/>
</dbReference>
<dbReference type="CDD" id="cd19537">
    <property type="entry name" value="C_NRPS-like"/>
    <property type="match status" value="1"/>
</dbReference>
<dbReference type="CDD" id="cd19545">
    <property type="entry name" value="FUM14_C_NRPS-like"/>
    <property type="match status" value="1"/>
</dbReference>
<dbReference type="FunFam" id="3.30.559.30:FF:000031">
    <property type="entry name" value="Nonribosomal peptide synthase GliP2"/>
    <property type="match status" value="1"/>
</dbReference>
<dbReference type="FunFam" id="3.40.50.12780:FF:000062">
    <property type="entry name" value="Nonribosomal peptide synthetase gliP"/>
    <property type="match status" value="1"/>
</dbReference>
<dbReference type="Gene3D" id="3.30.300.30">
    <property type="match status" value="2"/>
</dbReference>
<dbReference type="Gene3D" id="1.10.1200.10">
    <property type="entry name" value="ACP-like"/>
    <property type="match status" value="3"/>
</dbReference>
<dbReference type="Gene3D" id="3.30.559.10">
    <property type="entry name" value="Chloramphenicol acetyltransferase-like domain"/>
    <property type="match status" value="2"/>
</dbReference>
<dbReference type="Gene3D" id="3.40.50.12780">
    <property type="entry name" value="N-terminal domain of ligase-like"/>
    <property type="match status" value="2"/>
</dbReference>
<dbReference type="Gene3D" id="3.30.559.30">
    <property type="entry name" value="Nonribosomal peptide synthetase, condensation domain"/>
    <property type="match status" value="2"/>
</dbReference>
<dbReference type="InterPro" id="IPR010071">
    <property type="entry name" value="AA_adenyl_dom"/>
</dbReference>
<dbReference type="InterPro" id="IPR036736">
    <property type="entry name" value="ACP-like_sf"/>
</dbReference>
<dbReference type="InterPro" id="IPR045851">
    <property type="entry name" value="AMP-bd_C_sf"/>
</dbReference>
<dbReference type="InterPro" id="IPR020845">
    <property type="entry name" value="AMP-binding_CS"/>
</dbReference>
<dbReference type="InterPro" id="IPR000873">
    <property type="entry name" value="AMP-dep_synth/lig_dom"/>
</dbReference>
<dbReference type="InterPro" id="IPR042099">
    <property type="entry name" value="ANL_N_sf"/>
</dbReference>
<dbReference type="InterPro" id="IPR023213">
    <property type="entry name" value="CAT-like_dom_sf"/>
</dbReference>
<dbReference type="InterPro" id="IPR001242">
    <property type="entry name" value="Condensatn"/>
</dbReference>
<dbReference type="InterPro" id="IPR009081">
    <property type="entry name" value="PP-bd_ACP"/>
</dbReference>
<dbReference type="InterPro" id="IPR006162">
    <property type="entry name" value="Ppantetheine_attach_site"/>
</dbReference>
<dbReference type="NCBIfam" id="TIGR01733">
    <property type="entry name" value="AA-adenyl-dom"/>
    <property type="match status" value="1"/>
</dbReference>
<dbReference type="PANTHER" id="PTHR45527">
    <property type="entry name" value="NONRIBOSOMAL PEPTIDE SYNTHETASE"/>
    <property type="match status" value="1"/>
</dbReference>
<dbReference type="PANTHER" id="PTHR45527:SF11">
    <property type="entry name" value="NONRIBOSOMAL PEPTIDE SYNTHETASE 5"/>
    <property type="match status" value="1"/>
</dbReference>
<dbReference type="Pfam" id="PF00501">
    <property type="entry name" value="AMP-binding"/>
    <property type="match status" value="2"/>
</dbReference>
<dbReference type="Pfam" id="PF00668">
    <property type="entry name" value="Condensation"/>
    <property type="match status" value="2"/>
</dbReference>
<dbReference type="Pfam" id="PF00550">
    <property type="entry name" value="PP-binding"/>
    <property type="match status" value="3"/>
</dbReference>
<dbReference type="SUPFAM" id="SSF56801">
    <property type="entry name" value="Acetyl-CoA synthetase-like"/>
    <property type="match status" value="2"/>
</dbReference>
<dbReference type="SUPFAM" id="SSF47336">
    <property type="entry name" value="ACP-like"/>
    <property type="match status" value="3"/>
</dbReference>
<dbReference type="SUPFAM" id="SSF52777">
    <property type="entry name" value="CoA-dependent acyltransferases"/>
    <property type="match status" value="4"/>
</dbReference>
<dbReference type="PROSITE" id="PS00455">
    <property type="entry name" value="AMP_BINDING"/>
    <property type="match status" value="2"/>
</dbReference>
<dbReference type="PROSITE" id="PS50075">
    <property type="entry name" value="CARRIER"/>
    <property type="match status" value="3"/>
</dbReference>
<dbReference type="PROSITE" id="PS00012">
    <property type="entry name" value="PHOSPHOPANTETHEINE"/>
    <property type="match status" value="1"/>
</dbReference>